<reference key="1">
    <citation type="journal article" date="2006" name="Genome Res.">
        <title>Massive genome erosion and functional adaptations provide insights into the symbiotic lifestyle of Sodalis glossinidius in the tsetse host.</title>
        <authorList>
            <person name="Toh H."/>
            <person name="Weiss B.L."/>
            <person name="Perkin S.A.H."/>
            <person name="Yamashita A."/>
            <person name="Oshima K."/>
            <person name="Hattori M."/>
            <person name="Aksoy S."/>
        </authorList>
    </citation>
    <scope>NUCLEOTIDE SEQUENCE [LARGE SCALE GENOMIC DNA]</scope>
    <source>
        <strain>morsitans</strain>
    </source>
</reference>
<dbReference type="EMBL" id="AP008232">
    <property type="protein sequence ID" value="BAE73425.1"/>
    <property type="molecule type" value="Genomic_DNA"/>
</dbReference>
<dbReference type="RefSeq" id="WP_011410014.1">
    <property type="nucleotide sequence ID" value="NZ_LN854557.1"/>
</dbReference>
<dbReference type="SMR" id="Q2NWQ0"/>
<dbReference type="STRING" id="343509.SG0150"/>
<dbReference type="KEGG" id="sgl:SG0150"/>
<dbReference type="eggNOG" id="COG2901">
    <property type="taxonomic scope" value="Bacteria"/>
</dbReference>
<dbReference type="HOGENOM" id="CLU_158040_3_0_6"/>
<dbReference type="OrthoDB" id="9802388at2"/>
<dbReference type="Proteomes" id="UP000001932">
    <property type="component" value="Chromosome"/>
</dbReference>
<dbReference type="GO" id="GO:0003700">
    <property type="term" value="F:DNA-binding transcription factor activity"/>
    <property type="evidence" value="ECO:0007669"/>
    <property type="project" value="UniProtKB-UniRule"/>
</dbReference>
<dbReference type="GO" id="GO:0043565">
    <property type="term" value="F:sequence-specific DNA binding"/>
    <property type="evidence" value="ECO:0007669"/>
    <property type="project" value="InterPro"/>
</dbReference>
<dbReference type="FunFam" id="1.10.10.60:FF:000006">
    <property type="entry name" value="DNA-binding protein Fis"/>
    <property type="match status" value="1"/>
</dbReference>
<dbReference type="Gene3D" id="1.10.10.60">
    <property type="entry name" value="Homeodomain-like"/>
    <property type="match status" value="1"/>
</dbReference>
<dbReference type="HAMAP" id="MF_00166">
    <property type="entry name" value="DNA_binding_Fis"/>
    <property type="match status" value="1"/>
</dbReference>
<dbReference type="InterPro" id="IPR005412">
    <property type="entry name" value="Fis_DNA-bd"/>
</dbReference>
<dbReference type="InterPro" id="IPR009057">
    <property type="entry name" value="Homeodomain-like_sf"/>
</dbReference>
<dbReference type="InterPro" id="IPR002197">
    <property type="entry name" value="HTH_Fis"/>
</dbReference>
<dbReference type="InterPro" id="IPR050207">
    <property type="entry name" value="Trans_regulatory_Fis"/>
</dbReference>
<dbReference type="NCBIfam" id="NF001659">
    <property type="entry name" value="PRK00430.1"/>
    <property type="match status" value="1"/>
</dbReference>
<dbReference type="PANTHER" id="PTHR47918">
    <property type="entry name" value="DNA-BINDING PROTEIN FIS"/>
    <property type="match status" value="1"/>
</dbReference>
<dbReference type="PANTHER" id="PTHR47918:SF1">
    <property type="entry name" value="DNA-BINDING PROTEIN FIS"/>
    <property type="match status" value="1"/>
</dbReference>
<dbReference type="Pfam" id="PF02954">
    <property type="entry name" value="HTH_8"/>
    <property type="match status" value="1"/>
</dbReference>
<dbReference type="PIRSF" id="PIRSF002097">
    <property type="entry name" value="DNA-binding_Fis"/>
    <property type="match status" value="1"/>
</dbReference>
<dbReference type="PRINTS" id="PR01591">
    <property type="entry name" value="DNABINDNGFIS"/>
</dbReference>
<dbReference type="PRINTS" id="PR01590">
    <property type="entry name" value="HTHFIS"/>
</dbReference>
<dbReference type="SUPFAM" id="SSF46689">
    <property type="entry name" value="Homeodomain-like"/>
    <property type="match status" value="1"/>
</dbReference>
<sequence length="98" mass="11255">MFEQRVNSDVLTVSTVNSQDQVTQKPLRDSVKQALKNYFAQLNGQDVNDLYELVLAEVEQPLLDMVMQYTRGNQTRAAQMMGINRGTLRKKLKKYGMN</sequence>
<protein>
    <recommendedName>
        <fullName evidence="1">DNA-binding protein Fis</fullName>
    </recommendedName>
</protein>
<organism>
    <name type="scientific">Sodalis glossinidius (strain morsitans)</name>
    <dbReference type="NCBI Taxonomy" id="343509"/>
    <lineage>
        <taxon>Bacteria</taxon>
        <taxon>Pseudomonadati</taxon>
        <taxon>Pseudomonadota</taxon>
        <taxon>Gammaproteobacteria</taxon>
        <taxon>Enterobacterales</taxon>
        <taxon>Bruguierivoracaceae</taxon>
        <taxon>Sodalis</taxon>
    </lineage>
</organism>
<gene>
    <name evidence="1" type="primary">fis</name>
    <name type="ordered locus">SG0150</name>
</gene>
<name>FIS_SODGM</name>
<comment type="function">
    <text evidence="1">Activates ribosomal RNA transcription. Plays a direct role in upstream activation of rRNA promoters.</text>
</comment>
<comment type="subunit">
    <text evidence="1">Homodimer.</text>
</comment>
<comment type="similarity">
    <text evidence="1">Belongs to the transcriptional regulatory Fis family.</text>
</comment>
<keyword id="KW-0010">Activator</keyword>
<keyword id="KW-0238">DNA-binding</keyword>
<keyword id="KW-0804">Transcription</keyword>
<keyword id="KW-0805">Transcription regulation</keyword>
<accession>Q2NWQ0</accession>
<evidence type="ECO:0000255" key="1">
    <source>
        <dbReference type="HAMAP-Rule" id="MF_00166"/>
    </source>
</evidence>
<feature type="chain" id="PRO_1000023349" description="DNA-binding protein Fis">
    <location>
        <begin position="1"/>
        <end position="98"/>
    </location>
</feature>
<feature type="DNA-binding region" description="H-T-H motif" evidence="1">
    <location>
        <begin position="74"/>
        <end position="93"/>
    </location>
</feature>
<proteinExistence type="inferred from homology"/>